<name>RL4_XANCP</name>
<reference key="1">
    <citation type="journal article" date="2002" name="Nature">
        <title>Comparison of the genomes of two Xanthomonas pathogens with differing host specificities.</title>
        <authorList>
            <person name="da Silva A.C.R."/>
            <person name="Ferro J.A."/>
            <person name="Reinach F.C."/>
            <person name="Farah C.S."/>
            <person name="Furlan L.R."/>
            <person name="Quaggio R.B."/>
            <person name="Monteiro-Vitorello C.B."/>
            <person name="Van Sluys M.A."/>
            <person name="Almeida N.F. Jr."/>
            <person name="Alves L.M.C."/>
            <person name="do Amaral A.M."/>
            <person name="Bertolini M.C."/>
            <person name="Camargo L.E.A."/>
            <person name="Camarotte G."/>
            <person name="Cannavan F."/>
            <person name="Cardozo J."/>
            <person name="Chambergo F."/>
            <person name="Ciapina L.P."/>
            <person name="Cicarelli R.M.B."/>
            <person name="Coutinho L.L."/>
            <person name="Cursino-Santos J.R."/>
            <person name="El-Dorry H."/>
            <person name="Faria J.B."/>
            <person name="Ferreira A.J.S."/>
            <person name="Ferreira R.C.C."/>
            <person name="Ferro M.I.T."/>
            <person name="Formighieri E.F."/>
            <person name="Franco M.C."/>
            <person name="Greggio C.C."/>
            <person name="Gruber A."/>
            <person name="Katsuyama A.M."/>
            <person name="Kishi L.T."/>
            <person name="Leite R.P."/>
            <person name="Lemos E.G.M."/>
            <person name="Lemos M.V.F."/>
            <person name="Locali E.C."/>
            <person name="Machado M.A."/>
            <person name="Madeira A.M.B.N."/>
            <person name="Martinez-Rossi N.M."/>
            <person name="Martins E.C."/>
            <person name="Meidanis J."/>
            <person name="Menck C.F.M."/>
            <person name="Miyaki C.Y."/>
            <person name="Moon D.H."/>
            <person name="Moreira L.M."/>
            <person name="Novo M.T.M."/>
            <person name="Okura V.K."/>
            <person name="Oliveira M.C."/>
            <person name="Oliveira V.R."/>
            <person name="Pereira H.A."/>
            <person name="Rossi A."/>
            <person name="Sena J.A.D."/>
            <person name="Silva C."/>
            <person name="de Souza R.F."/>
            <person name="Spinola L.A.F."/>
            <person name="Takita M.A."/>
            <person name="Tamura R.E."/>
            <person name="Teixeira E.C."/>
            <person name="Tezza R.I.D."/>
            <person name="Trindade dos Santos M."/>
            <person name="Truffi D."/>
            <person name="Tsai S.M."/>
            <person name="White F.F."/>
            <person name="Setubal J.C."/>
            <person name="Kitajima J.P."/>
        </authorList>
    </citation>
    <scope>NUCLEOTIDE SEQUENCE [LARGE SCALE GENOMIC DNA]</scope>
    <source>
        <strain>ATCC 33913 / DSM 3586 / NCPPB 528 / LMG 568 / P 25</strain>
    </source>
</reference>
<gene>
    <name evidence="1" type="primary">rplD</name>
    <name type="ordered locus">XCC0896</name>
</gene>
<comment type="function">
    <text evidence="1">One of the primary rRNA binding proteins, this protein initially binds near the 5'-end of the 23S rRNA. It is important during the early stages of 50S assembly. It makes multiple contacts with different domains of the 23S rRNA in the assembled 50S subunit and ribosome.</text>
</comment>
<comment type="function">
    <text evidence="1">Forms part of the polypeptide exit tunnel.</text>
</comment>
<comment type="subunit">
    <text evidence="1">Part of the 50S ribosomal subunit.</text>
</comment>
<comment type="similarity">
    <text evidence="1">Belongs to the universal ribosomal protein uL4 family.</text>
</comment>
<protein>
    <recommendedName>
        <fullName evidence="1">Large ribosomal subunit protein uL4</fullName>
    </recommendedName>
    <alternativeName>
        <fullName evidence="3">50S ribosomal protein L4</fullName>
    </alternativeName>
</protein>
<feature type="chain" id="PRO_0000129316" description="Large ribosomal subunit protein uL4">
    <location>
        <begin position="1"/>
        <end position="201"/>
    </location>
</feature>
<feature type="region of interest" description="Disordered" evidence="2">
    <location>
        <begin position="44"/>
        <end position="68"/>
    </location>
</feature>
<evidence type="ECO:0000255" key="1">
    <source>
        <dbReference type="HAMAP-Rule" id="MF_01328"/>
    </source>
</evidence>
<evidence type="ECO:0000256" key="2">
    <source>
        <dbReference type="SAM" id="MobiDB-lite"/>
    </source>
</evidence>
<evidence type="ECO:0000305" key="3"/>
<organism>
    <name type="scientific">Xanthomonas campestris pv. campestris (strain ATCC 33913 / DSM 3586 / NCPPB 528 / LMG 568 / P 25)</name>
    <dbReference type="NCBI Taxonomy" id="190485"/>
    <lineage>
        <taxon>Bacteria</taxon>
        <taxon>Pseudomonadati</taxon>
        <taxon>Pseudomonadota</taxon>
        <taxon>Gammaproteobacteria</taxon>
        <taxon>Lysobacterales</taxon>
        <taxon>Lysobacteraceae</taxon>
        <taxon>Xanthomonas</taxon>
    </lineage>
</organism>
<accession>Q8PC48</accession>
<sequence>MELVITGSNNKVSVSDAVFGREFSEDLVHQVVVAYRNAGRAGTKAQKTRSEVAGTTKKSKKQKGGGARHGALTAPIFVGGGVTFAAKPRSFEQKVNRKMYRAAICAIFSELNRQGRLMIVDSFDIEATKTKGLIEKLKGMDVGKRPLIVTEEASEHLYLSARNLPYVQVRDVQGLDPVALVGADTVVITADAVKKVEEWLA</sequence>
<dbReference type="EMBL" id="AE008922">
    <property type="protein sequence ID" value="AAM40206.1"/>
    <property type="molecule type" value="Genomic_DNA"/>
</dbReference>
<dbReference type="RefSeq" id="NP_636282.1">
    <property type="nucleotide sequence ID" value="NC_003902.1"/>
</dbReference>
<dbReference type="RefSeq" id="WP_011036124.1">
    <property type="nucleotide sequence ID" value="NC_003902.1"/>
</dbReference>
<dbReference type="SMR" id="Q8PC48"/>
<dbReference type="STRING" id="190485.XCC0896"/>
<dbReference type="EnsemblBacteria" id="AAM40206">
    <property type="protein sequence ID" value="AAM40206"/>
    <property type="gene ID" value="XCC0896"/>
</dbReference>
<dbReference type="GeneID" id="58014528"/>
<dbReference type="KEGG" id="xcc:XCC0896"/>
<dbReference type="PATRIC" id="fig|190485.4.peg.968"/>
<dbReference type="eggNOG" id="COG0088">
    <property type="taxonomic scope" value="Bacteria"/>
</dbReference>
<dbReference type="HOGENOM" id="CLU_041575_5_2_6"/>
<dbReference type="OrthoDB" id="9803201at2"/>
<dbReference type="Proteomes" id="UP000001010">
    <property type="component" value="Chromosome"/>
</dbReference>
<dbReference type="GO" id="GO:1990904">
    <property type="term" value="C:ribonucleoprotein complex"/>
    <property type="evidence" value="ECO:0007669"/>
    <property type="project" value="UniProtKB-KW"/>
</dbReference>
<dbReference type="GO" id="GO:0005840">
    <property type="term" value="C:ribosome"/>
    <property type="evidence" value="ECO:0007669"/>
    <property type="project" value="UniProtKB-KW"/>
</dbReference>
<dbReference type="GO" id="GO:0019843">
    <property type="term" value="F:rRNA binding"/>
    <property type="evidence" value="ECO:0007669"/>
    <property type="project" value="UniProtKB-UniRule"/>
</dbReference>
<dbReference type="GO" id="GO:0003735">
    <property type="term" value="F:structural constituent of ribosome"/>
    <property type="evidence" value="ECO:0000318"/>
    <property type="project" value="GO_Central"/>
</dbReference>
<dbReference type="GO" id="GO:0006412">
    <property type="term" value="P:translation"/>
    <property type="evidence" value="ECO:0007669"/>
    <property type="project" value="UniProtKB-UniRule"/>
</dbReference>
<dbReference type="FunFam" id="3.40.1370.10:FF:000007">
    <property type="entry name" value="50S ribosomal protein L4"/>
    <property type="match status" value="1"/>
</dbReference>
<dbReference type="Gene3D" id="3.40.1370.10">
    <property type="match status" value="1"/>
</dbReference>
<dbReference type="HAMAP" id="MF_01328_B">
    <property type="entry name" value="Ribosomal_uL4_B"/>
    <property type="match status" value="1"/>
</dbReference>
<dbReference type="InterPro" id="IPR002136">
    <property type="entry name" value="Ribosomal_uL4"/>
</dbReference>
<dbReference type="InterPro" id="IPR013005">
    <property type="entry name" value="Ribosomal_uL4-like"/>
</dbReference>
<dbReference type="InterPro" id="IPR023574">
    <property type="entry name" value="Ribosomal_uL4_dom_sf"/>
</dbReference>
<dbReference type="NCBIfam" id="TIGR03953">
    <property type="entry name" value="rplD_bact"/>
    <property type="match status" value="1"/>
</dbReference>
<dbReference type="PANTHER" id="PTHR10746">
    <property type="entry name" value="50S RIBOSOMAL PROTEIN L4"/>
    <property type="match status" value="1"/>
</dbReference>
<dbReference type="PANTHER" id="PTHR10746:SF6">
    <property type="entry name" value="LARGE RIBOSOMAL SUBUNIT PROTEIN UL4M"/>
    <property type="match status" value="1"/>
</dbReference>
<dbReference type="Pfam" id="PF00573">
    <property type="entry name" value="Ribosomal_L4"/>
    <property type="match status" value="1"/>
</dbReference>
<dbReference type="SUPFAM" id="SSF52166">
    <property type="entry name" value="Ribosomal protein L4"/>
    <property type="match status" value="1"/>
</dbReference>
<keyword id="KW-1185">Reference proteome</keyword>
<keyword id="KW-0687">Ribonucleoprotein</keyword>
<keyword id="KW-0689">Ribosomal protein</keyword>
<keyword id="KW-0694">RNA-binding</keyword>
<keyword id="KW-0699">rRNA-binding</keyword>
<proteinExistence type="inferred from homology"/>